<feature type="chain" id="PRO_0000069464" description="Galanin receptor type 1">
    <location>
        <begin position="1"/>
        <end position="348"/>
    </location>
</feature>
<feature type="topological domain" description="Extracellular" evidence="3">
    <location>
        <begin position="1"/>
        <end position="34"/>
    </location>
</feature>
<feature type="transmembrane region" description="Helical; Name=1" evidence="3">
    <location>
        <begin position="35"/>
        <end position="55"/>
    </location>
</feature>
<feature type="topological domain" description="Cytoplasmic" evidence="3">
    <location>
        <begin position="56"/>
        <end position="70"/>
    </location>
</feature>
<feature type="transmembrane region" description="Helical; Name=2" evidence="3">
    <location>
        <begin position="71"/>
        <end position="91"/>
    </location>
</feature>
<feature type="topological domain" description="Extracellular" evidence="3">
    <location>
        <begin position="92"/>
        <end position="109"/>
    </location>
</feature>
<feature type="transmembrane region" description="Helical; Name=3" evidence="3">
    <location>
        <begin position="110"/>
        <end position="131"/>
    </location>
</feature>
<feature type="topological domain" description="Cytoplasmic" evidence="3">
    <location>
        <begin position="132"/>
        <end position="151"/>
    </location>
</feature>
<feature type="transmembrane region" description="Helical; Name=4" evidence="3">
    <location>
        <begin position="152"/>
        <end position="172"/>
    </location>
</feature>
<feature type="topological domain" description="Extracellular" evidence="3">
    <location>
        <begin position="173"/>
        <end position="197"/>
    </location>
</feature>
<feature type="transmembrane region" description="Helical; Name=5" evidence="3">
    <location>
        <begin position="198"/>
        <end position="218"/>
    </location>
</feature>
<feature type="topological domain" description="Cytoplasmic" evidence="3">
    <location>
        <begin position="219"/>
        <end position="247"/>
    </location>
</feature>
<feature type="transmembrane region" description="Helical; Name=6" evidence="3">
    <location>
        <begin position="248"/>
        <end position="268"/>
    </location>
</feature>
<feature type="topological domain" description="Extracellular" evidence="3">
    <location>
        <begin position="269"/>
        <end position="270"/>
    </location>
</feature>
<feature type="transmembrane region" description="Helical; Name=7" evidence="3">
    <location>
        <begin position="271"/>
        <end position="291"/>
    </location>
</feature>
<feature type="topological domain" description="Cytoplasmic" evidence="3">
    <location>
        <begin position="292"/>
        <end position="348"/>
    </location>
</feature>
<feature type="region of interest" description="Disordered" evidence="5">
    <location>
        <begin position="328"/>
        <end position="348"/>
    </location>
</feature>
<feature type="compositionally biased region" description="Basic and acidic residues" evidence="5">
    <location>
        <begin position="328"/>
        <end position="337"/>
    </location>
</feature>
<feature type="lipid moiety-binding region" description="S-palmitoyl cysteine" evidence="1">
    <location>
        <position position="319"/>
    </location>
</feature>
<feature type="glycosylation site" description="N-linked (GlcNAc...) asparagine" evidence="3">
    <location>
        <position position="7"/>
    </location>
</feature>
<feature type="glycosylation site" description="N-linked (GlcNAc...) asparagine" evidence="3">
    <location>
        <position position="12"/>
    </location>
</feature>
<feature type="glycosylation site" description="N-linked (GlcNAc...) asparagine" evidence="3">
    <location>
        <position position="182"/>
    </location>
</feature>
<feature type="disulfide bond" evidence="4">
    <location>
        <begin position="108"/>
        <end position="186"/>
    </location>
</feature>
<reference key="1">
    <citation type="journal article" date="1997" name="FEBS Lett.">
        <title>Genomic organization and functional characterization of the mouse GalR1 galanin receptor.</title>
        <authorList>
            <person name="Wang S."/>
            <person name="He C."/>
            <person name="Maguire M.T."/>
            <person name="Clemmons A.L."/>
            <person name="Burrier R.E."/>
            <person name="Guzzi M.F."/>
            <person name="Strader C.D."/>
            <person name="Parker E.M."/>
            <person name="Bayne M.L."/>
        </authorList>
    </citation>
    <scope>NUCLEOTIDE SEQUENCE [MRNA]</scope>
    <scope>FUNCTION</scope>
    <scope>TISSUE SPECIFICITY</scope>
    <source>
        <tissue>Brain</tissue>
    </source>
</reference>
<reference key="2">
    <citation type="journal article" date="1997" name="Genomics">
        <title>Structural organization of the mouse and human GALR1 galanin receptor genes (Galnr and GALNR) and chromosomal localization of the mouse gene.</title>
        <authorList>
            <person name="Jacoby A.S."/>
            <person name="Webb G.C."/>
            <person name="Liu M.L."/>
            <person name="Kofler B."/>
            <person name="Hort Y.J."/>
            <person name="Fathi Z."/>
            <person name="Bottema C.D.K."/>
            <person name="Shine J."/>
            <person name="Iismaa T.P."/>
        </authorList>
    </citation>
    <scope>NUCLEOTIDE SEQUENCE [GENOMIC DNA]</scope>
    <source>
        <strain>129</strain>
    </source>
</reference>
<keyword id="KW-1003">Cell membrane</keyword>
<keyword id="KW-1015">Disulfide bond</keyword>
<keyword id="KW-0297">G-protein coupled receptor</keyword>
<keyword id="KW-0325">Glycoprotein</keyword>
<keyword id="KW-0449">Lipoprotein</keyword>
<keyword id="KW-0472">Membrane</keyword>
<keyword id="KW-0564">Palmitate</keyword>
<keyword id="KW-0675">Receptor</keyword>
<keyword id="KW-1185">Reference proteome</keyword>
<keyword id="KW-0807">Transducer</keyword>
<keyword id="KW-0812">Transmembrane</keyword>
<keyword id="KW-1133">Transmembrane helix</keyword>
<accession>P56479</accession>
<organism>
    <name type="scientific">Mus musculus</name>
    <name type="common">Mouse</name>
    <dbReference type="NCBI Taxonomy" id="10090"/>
    <lineage>
        <taxon>Eukaryota</taxon>
        <taxon>Metazoa</taxon>
        <taxon>Chordata</taxon>
        <taxon>Craniata</taxon>
        <taxon>Vertebrata</taxon>
        <taxon>Euteleostomi</taxon>
        <taxon>Mammalia</taxon>
        <taxon>Eutheria</taxon>
        <taxon>Euarchontoglires</taxon>
        <taxon>Glires</taxon>
        <taxon>Rodentia</taxon>
        <taxon>Myomorpha</taxon>
        <taxon>Muroidea</taxon>
        <taxon>Muridae</taxon>
        <taxon>Murinae</taxon>
        <taxon>Mus</taxon>
        <taxon>Mus</taxon>
    </lineage>
</organism>
<proteinExistence type="evidence at transcript level"/>
<gene>
    <name type="primary">Galr1</name>
    <name type="synonym">Galnr</name>
    <name type="synonym">Galnr1</name>
</gene>
<comment type="function">
    <text evidence="2 6">Receptor for the hormone galanin. The activity of this receptor is mediated by G proteins that inhibit adenylate cyclase activity.</text>
</comment>
<comment type="subunit">
    <text evidence="2">Interacts with GRP39 AND HTR1A.</text>
</comment>
<comment type="subcellular location">
    <subcellularLocation>
        <location evidence="2">Cell membrane</location>
        <topology>Multi-pass membrane protein</topology>
    </subcellularLocation>
</comment>
<comment type="tissue specificity">
    <text evidence="6">Expression is detected in brain, spinal cord, heart and skeletal muscle.</text>
</comment>
<comment type="PTM">
    <text evidence="1">Three cysteine residues are found in the C-terminus, at least one of which may be palmitoylated.</text>
</comment>
<comment type="similarity">
    <text evidence="4">Belongs to the G-protein coupled receptor 1 family.</text>
</comment>
<dbReference type="EMBL" id="Y15004">
    <property type="protein sequence ID" value="CAA75237.1"/>
    <property type="molecule type" value="mRNA"/>
</dbReference>
<dbReference type="EMBL" id="U90657">
    <property type="protein sequence ID" value="AAB87748.1"/>
    <property type="molecule type" value="Genomic_DNA"/>
</dbReference>
<dbReference type="EMBL" id="U90655">
    <property type="protein sequence ID" value="AAB87748.1"/>
    <property type="status" value="JOINED"/>
    <property type="molecule type" value="Genomic_DNA"/>
</dbReference>
<dbReference type="EMBL" id="U90656">
    <property type="protein sequence ID" value="AAB87748.1"/>
    <property type="status" value="JOINED"/>
    <property type="molecule type" value="Genomic_DNA"/>
</dbReference>
<dbReference type="CCDS" id="CCDS29372.1"/>
<dbReference type="RefSeq" id="NP_032108.1">
    <property type="nucleotide sequence ID" value="NM_008082.2"/>
</dbReference>
<dbReference type="SMR" id="P56479"/>
<dbReference type="FunCoup" id="P56479">
    <property type="interactions" value="980"/>
</dbReference>
<dbReference type="STRING" id="10090.ENSMUSP00000066381"/>
<dbReference type="GuidetoPHARMACOLOGY" id="243"/>
<dbReference type="GlyCosmos" id="P56479">
    <property type="glycosylation" value="3 sites, No reported glycans"/>
</dbReference>
<dbReference type="GlyGen" id="P56479">
    <property type="glycosylation" value="3 sites"/>
</dbReference>
<dbReference type="PhosphoSitePlus" id="P56479"/>
<dbReference type="PaxDb" id="10090-ENSMUSP00000066381"/>
<dbReference type="ProteomicsDB" id="268838"/>
<dbReference type="Antibodypedia" id="10410">
    <property type="antibodies" value="356 antibodies from 35 providers"/>
</dbReference>
<dbReference type="DNASU" id="14427"/>
<dbReference type="Ensembl" id="ENSMUST00000065224.8">
    <property type="protein sequence ID" value="ENSMUSP00000066381.7"/>
    <property type="gene ID" value="ENSMUSG00000024553.9"/>
</dbReference>
<dbReference type="GeneID" id="14427"/>
<dbReference type="KEGG" id="mmu:14427"/>
<dbReference type="UCSC" id="uc008ftq.1">
    <property type="organism name" value="mouse"/>
</dbReference>
<dbReference type="AGR" id="MGI:1096364"/>
<dbReference type="CTD" id="2587"/>
<dbReference type="MGI" id="MGI:1096364">
    <property type="gene designation" value="Galr1"/>
</dbReference>
<dbReference type="VEuPathDB" id="HostDB:ENSMUSG00000024553"/>
<dbReference type="eggNOG" id="KOG3656">
    <property type="taxonomic scope" value="Eukaryota"/>
</dbReference>
<dbReference type="GeneTree" id="ENSGT01130000278263"/>
<dbReference type="HOGENOM" id="CLU_009579_6_4_1"/>
<dbReference type="InParanoid" id="P56479"/>
<dbReference type="OMA" id="CWEQWPD"/>
<dbReference type="OrthoDB" id="2132067at2759"/>
<dbReference type="PhylomeDB" id="P56479"/>
<dbReference type="TreeFam" id="TF315737"/>
<dbReference type="Reactome" id="R-MMU-375276">
    <property type="pathway name" value="Peptide ligand-binding receptors"/>
</dbReference>
<dbReference type="Reactome" id="R-MMU-418594">
    <property type="pathway name" value="G alpha (i) signalling events"/>
</dbReference>
<dbReference type="BioGRID-ORCS" id="14427">
    <property type="hits" value="4 hits in 76 CRISPR screens"/>
</dbReference>
<dbReference type="ChiTaRS" id="Galr1">
    <property type="organism name" value="mouse"/>
</dbReference>
<dbReference type="PRO" id="PR:P56479"/>
<dbReference type="Proteomes" id="UP000000589">
    <property type="component" value="Chromosome 18"/>
</dbReference>
<dbReference type="RNAct" id="P56479">
    <property type="molecule type" value="protein"/>
</dbReference>
<dbReference type="Bgee" id="ENSMUSG00000024553">
    <property type="expression patterns" value="Expressed in lumbar dorsal root ganglion and 23 other cell types or tissues"/>
</dbReference>
<dbReference type="GO" id="GO:0005886">
    <property type="term" value="C:plasma membrane"/>
    <property type="evidence" value="ECO:0007669"/>
    <property type="project" value="UniProtKB-SubCell"/>
</dbReference>
<dbReference type="GO" id="GO:0004966">
    <property type="term" value="F:galanin receptor activity"/>
    <property type="evidence" value="ECO:0000250"/>
    <property type="project" value="UniProtKB"/>
</dbReference>
<dbReference type="GO" id="GO:0042923">
    <property type="term" value="F:neuropeptide binding"/>
    <property type="evidence" value="ECO:0007669"/>
    <property type="project" value="Ensembl"/>
</dbReference>
<dbReference type="GO" id="GO:0017046">
    <property type="term" value="F:peptide hormone binding"/>
    <property type="evidence" value="ECO:0000250"/>
    <property type="project" value="UniProtKB"/>
</dbReference>
<dbReference type="GO" id="GO:0007189">
    <property type="term" value="P:adenylate cyclase-activating G protein-coupled receptor signaling pathway"/>
    <property type="evidence" value="ECO:0007669"/>
    <property type="project" value="Ensembl"/>
</dbReference>
<dbReference type="GO" id="GO:0051464">
    <property type="term" value="P:positive regulation of cortisol secretion"/>
    <property type="evidence" value="ECO:0007669"/>
    <property type="project" value="Ensembl"/>
</dbReference>
<dbReference type="GO" id="GO:0007204">
    <property type="term" value="P:positive regulation of cytosolic calcium ion concentration"/>
    <property type="evidence" value="ECO:0007669"/>
    <property type="project" value="InterPro"/>
</dbReference>
<dbReference type="GO" id="GO:0045944">
    <property type="term" value="P:positive regulation of transcription by RNA polymerase II"/>
    <property type="evidence" value="ECO:0000250"/>
    <property type="project" value="UniProtKB"/>
</dbReference>
<dbReference type="CDD" id="cd15098">
    <property type="entry name" value="7tmA_Gal1_R"/>
    <property type="match status" value="1"/>
</dbReference>
<dbReference type="FunFam" id="1.20.1070.10:FF:000135">
    <property type="entry name" value="galanin receptor type 1"/>
    <property type="match status" value="1"/>
</dbReference>
<dbReference type="Gene3D" id="1.20.1070.10">
    <property type="entry name" value="Rhodopsin 7-helix transmembrane proteins"/>
    <property type="match status" value="1"/>
</dbReference>
<dbReference type="InterPro" id="IPR003906">
    <property type="entry name" value="GAL1_rcpt"/>
</dbReference>
<dbReference type="InterPro" id="IPR000405">
    <property type="entry name" value="Galanin_rcpt"/>
</dbReference>
<dbReference type="InterPro" id="IPR000276">
    <property type="entry name" value="GPCR_Rhodpsn"/>
</dbReference>
<dbReference type="InterPro" id="IPR017452">
    <property type="entry name" value="GPCR_Rhodpsn_7TM"/>
</dbReference>
<dbReference type="PANTHER" id="PTHR45695:SF25">
    <property type="entry name" value="GALANIN RECEPTOR 1"/>
    <property type="match status" value="1"/>
</dbReference>
<dbReference type="PANTHER" id="PTHR45695">
    <property type="entry name" value="LEUCOKININ RECEPTOR-RELATED"/>
    <property type="match status" value="1"/>
</dbReference>
<dbReference type="Pfam" id="PF00001">
    <property type="entry name" value="7tm_1"/>
    <property type="match status" value="1"/>
</dbReference>
<dbReference type="PRINTS" id="PR01418">
    <property type="entry name" value="GALANIN1R"/>
</dbReference>
<dbReference type="PRINTS" id="PR00663">
    <property type="entry name" value="GALANINR"/>
</dbReference>
<dbReference type="PRINTS" id="PR00237">
    <property type="entry name" value="GPCRRHODOPSN"/>
</dbReference>
<dbReference type="SMART" id="SM01381">
    <property type="entry name" value="7TM_GPCR_Srsx"/>
    <property type="match status" value="1"/>
</dbReference>
<dbReference type="SUPFAM" id="SSF81321">
    <property type="entry name" value="Family A G protein-coupled receptor-like"/>
    <property type="match status" value="1"/>
</dbReference>
<dbReference type="PROSITE" id="PS00237">
    <property type="entry name" value="G_PROTEIN_RECEP_F1_1"/>
    <property type="match status" value="1"/>
</dbReference>
<dbReference type="PROSITE" id="PS50262">
    <property type="entry name" value="G_PROTEIN_RECEP_F1_2"/>
    <property type="match status" value="1"/>
</dbReference>
<sequence length="348" mass="39114">MELAMVNLSEGNGSDPEPPAPESRPLFGIGVENFITLVVFGLIFAMGVLGNSLVITVLARSKPGKPRSTTNLFILNLSIADLAYLLFCIPFQATVYALPTWVLGAFICKFIHYFFTVSMLVSIFTLAAMSVDRYVAIVHSRRSSSLRVSRNALLGVGFIWALSIAMASPVAYHQRLFHRDSNQTFCWEQWPNKLHKKAYVVCTFVFGYLLPLLLICFCYAKVLNHLHKKLKNMSKKSEASKKKTAQTVLVVVVVFGISWLPHHVVHLWAEFGAFPLTPASFFFRITAHCLAYSNSSVNPIIYAFLSENFRKAYKQVFKCHVCDESPRSETKENKSRMDTPPSTNCTHV</sequence>
<evidence type="ECO:0000250" key="1"/>
<evidence type="ECO:0000250" key="2">
    <source>
        <dbReference type="UniProtKB" id="P47211"/>
    </source>
</evidence>
<evidence type="ECO:0000255" key="3"/>
<evidence type="ECO:0000255" key="4">
    <source>
        <dbReference type="PROSITE-ProRule" id="PRU00521"/>
    </source>
</evidence>
<evidence type="ECO:0000256" key="5">
    <source>
        <dbReference type="SAM" id="MobiDB-lite"/>
    </source>
</evidence>
<evidence type="ECO:0000269" key="6">
    <source>
    </source>
</evidence>
<protein>
    <recommendedName>
        <fullName>Galanin receptor type 1</fullName>
        <shortName>GAL1-R</shortName>
        <shortName>GALR-1</shortName>
    </recommendedName>
</protein>
<name>GALR1_MOUSE</name>